<dbReference type="EMBL" id="AY205104">
    <property type="protein sequence ID" value="AAP30978.1"/>
    <property type="molecule type" value="Genomic_DNA"/>
</dbReference>
<dbReference type="RefSeq" id="NP_001158061.1">
    <property type="nucleotide sequence ID" value="NM_001164589.1"/>
</dbReference>
<dbReference type="SMR" id="Q864J3"/>
<dbReference type="STRING" id="9555.ENSPANP00000015446"/>
<dbReference type="GlyCosmos" id="Q864J3">
    <property type="glycosylation" value="1 site, No reported glycans"/>
</dbReference>
<dbReference type="Ensembl" id="ENSPANT00000000697.3">
    <property type="protein sequence ID" value="ENSPANP00000015446.3"/>
    <property type="gene ID" value="ENSPANG00000050036.1"/>
</dbReference>
<dbReference type="GeneID" id="100303419"/>
<dbReference type="KEGG" id="panu:100303419"/>
<dbReference type="CTD" id="4157"/>
<dbReference type="eggNOG" id="KOG3656">
    <property type="taxonomic scope" value="Eukaryota"/>
</dbReference>
<dbReference type="GeneTree" id="ENSGT01120000271819"/>
<dbReference type="HOGENOM" id="CLU_009579_13_0_1"/>
<dbReference type="OMA" id="VTFFCTT"/>
<dbReference type="Proteomes" id="UP000028761">
    <property type="component" value="Chromosome 18"/>
</dbReference>
<dbReference type="GO" id="GO:0005886">
    <property type="term" value="C:plasma membrane"/>
    <property type="evidence" value="ECO:0000250"/>
    <property type="project" value="UniProtKB"/>
</dbReference>
<dbReference type="GO" id="GO:0004980">
    <property type="term" value="F:melanocyte-stimulating hormone receptor activity"/>
    <property type="evidence" value="ECO:0007669"/>
    <property type="project" value="Ensembl"/>
</dbReference>
<dbReference type="GO" id="GO:0031625">
    <property type="term" value="F:ubiquitin protein ligase binding"/>
    <property type="evidence" value="ECO:0007669"/>
    <property type="project" value="Ensembl"/>
</dbReference>
<dbReference type="GO" id="GO:0007189">
    <property type="term" value="P:adenylate cyclase-activating G protein-coupled receptor signaling pathway"/>
    <property type="evidence" value="ECO:0007669"/>
    <property type="project" value="Ensembl"/>
</dbReference>
<dbReference type="GO" id="GO:0035556">
    <property type="term" value="P:intracellular signal transduction"/>
    <property type="evidence" value="ECO:0007669"/>
    <property type="project" value="Ensembl"/>
</dbReference>
<dbReference type="GO" id="GO:0042438">
    <property type="term" value="P:melanin biosynthetic process"/>
    <property type="evidence" value="ECO:0007669"/>
    <property type="project" value="Ensembl"/>
</dbReference>
<dbReference type="GO" id="GO:0032720">
    <property type="term" value="P:negative regulation of tumor necrosis factor production"/>
    <property type="evidence" value="ECO:0007669"/>
    <property type="project" value="Ensembl"/>
</dbReference>
<dbReference type="GO" id="GO:0007200">
    <property type="term" value="P:phospholipase C-activating G protein-coupled receptor signaling pathway"/>
    <property type="evidence" value="ECO:0007669"/>
    <property type="project" value="Ensembl"/>
</dbReference>
<dbReference type="GO" id="GO:0141163">
    <property type="term" value="P:positive regulation of cAMP/PKA signal transduction"/>
    <property type="evidence" value="ECO:0007669"/>
    <property type="project" value="Ensembl"/>
</dbReference>
<dbReference type="GO" id="GO:0045944">
    <property type="term" value="P:positive regulation of transcription by RNA polymerase II"/>
    <property type="evidence" value="ECO:0007669"/>
    <property type="project" value="Ensembl"/>
</dbReference>
<dbReference type="GO" id="GO:0019233">
    <property type="term" value="P:sensory perception of pain"/>
    <property type="evidence" value="ECO:0007669"/>
    <property type="project" value="Ensembl"/>
</dbReference>
<dbReference type="GO" id="GO:0070914">
    <property type="term" value="P:UV-damage excision repair"/>
    <property type="evidence" value="ECO:0007669"/>
    <property type="project" value="Ensembl"/>
</dbReference>
<dbReference type="CDD" id="cd15351">
    <property type="entry name" value="7tmA_MC1R"/>
    <property type="match status" value="1"/>
</dbReference>
<dbReference type="FunFam" id="1.20.1070.10:FF:000211">
    <property type="entry name" value="Melanocyte-stimulating hormone receptor"/>
    <property type="match status" value="1"/>
</dbReference>
<dbReference type="Gene3D" id="1.20.1070.10">
    <property type="entry name" value="Rhodopsin 7-helix transmembrane proteins"/>
    <property type="match status" value="1"/>
</dbReference>
<dbReference type="InterPro" id="IPR000276">
    <property type="entry name" value="GPCR_Rhodpsn"/>
</dbReference>
<dbReference type="InterPro" id="IPR017452">
    <property type="entry name" value="GPCR_Rhodpsn_7TM"/>
</dbReference>
<dbReference type="InterPro" id="IPR001671">
    <property type="entry name" value="Melcrt_ACTH_rcpt"/>
</dbReference>
<dbReference type="InterPro" id="IPR000761">
    <property type="entry name" value="MSH_rcpt"/>
</dbReference>
<dbReference type="PANTHER" id="PTHR22750">
    <property type="entry name" value="G-PROTEIN COUPLED RECEPTOR"/>
    <property type="match status" value="1"/>
</dbReference>
<dbReference type="Pfam" id="PF00001">
    <property type="entry name" value="7tm_1"/>
    <property type="match status" value="2"/>
</dbReference>
<dbReference type="PRINTS" id="PR00237">
    <property type="entry name" value="GPCRRHODOPSN"/>
</dbReference>
<dbReference type="PRINTS" id="PR00534">
    <property type="entry name" value="MCRFAMILY"/>
</dbReference>
<dbReference type="PRINTS" id="PR00536">
    <property type="entry name" value="MELNOCYTESHR"/>
</dbReference>
<dbReference type="SMART" id="SM01381">
    <property type="entry name" value="7TM_GPCR_Srsx"/>
    <property type="match status" value="1"/>
</dbReference>
<dbReference type="SUPFAM" id="SSF81321">
    <property type="entry name" value="Family A G protein-coupled receptor-like"/>
    <property type="match status" value="1"/>
</dbReference>
<dbReference type="PROSITE" id="PS00237">
    <property type="entry name" value="G_PROTEIN_RECEP_F1_1"/>
    <property type="match status" value="1"/>
</dbReference>
<dbReference type="PROSITE" id="PS50262">
    <property type="entry name" value="G_PROTEIN_RECEP_F1_2"/>
    <property type="match status" value="1"/>
</dbReference>
<name>MSHR_PAPAN</name>
<proteinExistence type="inferred from homology"/>
<sequence length="317" mass="34779">MPVQGSQRRLLGSLNSTPTATPHLGLAANQTGARCLEVSVPDGLFLSLGLVSLVENVLVVTAIAKNRNLHSPMYCFICCLALSDLLVSGSNMLETAVTLLLEAGVLAARAAVVQQLDNVIDVITCSSMLSSLCFLGAIAVDRYISIFYALRYHSIVTLPRARRAVAAIWVASVLFSTLFIAYYDHAAVLLCLVIFFLAMLVLMAVLYVHMLARACQHAQGIARLHKRQRLAHQGFGLKGAATLTILLGIFFLCWGPFFLHLTLIVLCPQHPTCSCIFKNFNLFLALIICNAIIDPLIYAFRSQELRRTLKEVLLCSW</sequence>
<protein>
    <recommendedName>
        <fullName>Melanocyte-stimulating hormone receptor</fullName>
        <shortName>MSH-R</shortName>
    </recommendedName>
    <alternativeName>
        <fullName>Melanocortin receptor 1</fullName>
        <shortName>MC1-R</shortName>
    </alternativeName>
</protein>
<feature type="chain" id="PRO_0000069838" description="Melanocyte-stimulating hormone receptor">
    <location>
        <begin position="1"/>
        <end position="317"/>
    </location>
</feature>
<feature type="topological domain" description="Extracellular" evidence="2">
    <location>
        <begin position="1"/>
        <end position="37"/>
    </location>
</feature>
<feature type="transmembrane region" description="Helical; Name=1" evidence="2">
    <location>
        <begin position="38"/>
        <end position="63"/>
    </location>
</feature>
<feature type="topological domain" description="Cytoplasmic" evidence="2">
    <location>
        <begin position="64"/>
        <end position="72"/>
    </location>
</feature>
<feature type="transmembrane region" description="Helical; Name=2" evidence="2">
    <location>
        <begin position="73"/>
        <end position="93"/>
    </location>
</feature>
<feature type="topological domain" description="Extracellular" evidence="2">
    <location>
        <begin position="94"/>
        <end position="118"/>
    </location>
</feature>
<feature type="transmembrane region" description="Helical; Name=3" evidence="2">
    <location>
        <begin position="119"/>
        <end position="140"/>
    </location>
</feature>
<feature type="topological domain" description="Cytoplasmic" evidence="2">
    <location>
        <begin position="141"/>
        <end position="163"/>
    </location>
</feature>
<feature type="transmembrane region" description="Helical; Name=4" evidence="2">
    <location>
        <begin position="164"/>
        <end position="183"/>
    </location>
</feature>
<feature type="topological domain" description="Extracellular" evidence="2">
    <location>
        <begin position="184"/>
        <end position="191"/>
    </location>
</feature>
<feature type="transmembrane region" description="Helical; Name=5" evidence="2">
    <location>
        <begin position="192"/>
        <end position="211"/>
    </location>
</feature>
<feature type="topological domain" description="Cytoplasmic" evidence="2">
    <location>
        <begin position="212"/>
        <end position="240"/>
    </location>
</feature>
<feature type="transmembrane region" description="Helical; Name=6" evidence="2">
    <location>
        <begin position="241"/>
        <end position="266"/>
    </location>
</feature>
<feature type="topological domain" description="Extracellular" evidence="2">
    <location>
        <begin position="267"/>
        <end position="279"/>
    </location>
</feature>
<feature type="transmembrane region" description="Helical; Name=7" evidence="2">
    <location>
        <begin position="280"/>
        <end position="300"/>
    </location>
</feature>
<feature type="topological domain" description="Cytoplasmic" evidence="2">
    <location>
        <begin position="301"/>
        <end position="317"/>
    </location>
</feature>
<feature type="lipid moiety-binding region" description="S-palmitoyl cysteine" evidence="2">
    <location>
        <position position="315"/>
    </location>
</feature>
<feature type="glycosylation site" description="N-linked (GlcNAc...) asparagine" evidence="2">
    <location>
        <position position="29"/>
    </location>
</feature>
<keyword id="KW-1003">Cell membrane</keyword>
<keyword id="KW-0297">G-protein coupled receptor</keyword>
<keyword id="KW-0325">Glycoprotein</keyword>
<keyword id="KW-0449">Lipoprotein</keyword>
<keyword id="KW-0472">Membrane</keyword>
<keyword id="KW-0564">Palmitate</keyword>
<keyword id="KW-0675">Receptor</keyword>
<keyword id="KW-1185">Reference proteome</keyword>
<keyword id="KW-0807">Transducer</keyword>
<keyword id="KW-0812">Transmembrane</keyword>
<keyword id="KW-1133">Transmembrane helix</keyword>
<evidence type="ECO:0000250" key="1">
    <source>
        <dbReference type="UniProtKB" id="Q01726"/>
    </source>
</evidence>
<evidence type="ECO:0000255" key="2"/>
<evidence type="ECO:0000255" key="3">
    <source>
        <dbReference type="PROSITE-ProRule" id="PRU00521"/>
    </source>
</evidence>
<organism>
    <name type="scientific">Papio anubis</name>
    <name type="common">Olive baboon</name>
    <dbReference type="NCBI Taxonomy" id="9555"/>
    <lineage>
        <taxon>Eukaryota</taxon>
        <taxon>Metazoa</taxon>
        <taxon>Chordata</taxon>
        <taxon>Craniata</taxon>
        <taxon>Vertebrata</taxon>
        <taxon>Euteleostomi</taxon>
        <taxon>Mammalia</taxon>
        <taxon>Eutheria</taxon>
        <taxon>Euarchontoglires</taxon>
        <taxon>Primates</taxon>
        <taxon>Haplorrhini</taxon>
        <taxon>Catarrhini</taxon>
        <taxon>Cercopithecidae</taxon>
        <taxon>Cercopithecinae</taxon>
        <taxon>Papio</taxon>
    </lineage>
</organism>
<accession>Q864J3</accession>
<gene>
    <name type="primary">MC1R</name>
</gene>
<reference key="1">
    <citation type="journal article" date="2003" name="Am. J. Phys. Anthropol.">
        <title>Evolution of a pigmentation gene, the melanocortin-1 receptor, in primates.</title>
        <authorList>
            <person name="Mundy N.I."/>
            <person name="Kelly J."/>
        </authorList>
    </citation>
    <scope>NUCLEOTIDE SEQUENCE [GENOMIC DNA]</scope>
    <source>
        <strain>Isolate 1</strain>
    </source>
</reference>
<comment type="function">
    <text evidence="1">Receptor for MSH (alpha, beta and gamma) and ACTH. The activity of this receptor is mediated by G proteins which activate adenylate cyclase. Mediates melanogenesis, the production of eumelanin (black/brown) and phaeomelanin (red/yellow), via regulation of cAMP signaling in melanocytes.</text>
</comment>
<comment type="subunit">
    <text evidence="1">Interacts with MGRN1, but does not undergo MGRN1-mediated ubiquitination; this interaction competes with GNAS-binding and thus inhibits agonist-induced cAMP production. Interacts with OPN3; the interaction results in a decrease in MC1R-mediated cAMP signaling and ultimately a decrease in melanin production in melanocytes.</text>
</comment>
<comment type="subcellular location">
    <subcellularLocation>
        <location evidence="1">Cell membrane</location>
        <topology evidence="2">Multi-pass membrane protein</topology>
    </subcellularLocation>
</comment>
<comment type="similarity">
    <text evidence="3">Belongs to the G-protein coupled receptor 1 family.</text>
</comment>